<keyword id="KW-0460">Magnesium</keyword>
<keyword id="KW-0472">Membrane</keyword>
<keyword id="KW-0479">Metal-binding</keyword>
<keyword id="KW-0489">Methyltransferase</keyword>
<keyword id="KW-0496">Mitochondrion</keyword>
<keyword id="KW-0999">Mitochondrion inner membrane</keyword>
<keyword id="KW-1185">Reference proteome</keyword>
<keyword id="KW-0949">S-adenosyl-L-methionine</keyword>
<keyword id="KW-0808">Transferase</keyword>
<keyword id="KW-0831">Ubiquinone biosynthesis</keyword>
<dbReference type="EC" id="2.1.1.64" evidence="1"/>
<dbReference type="EC" id="2.1.1.-" evidence="1"/>
<dbReference type="EC" id="2.1.1.114" evidence="1"/>
<dbReference type="EMBL" id="AAFI02000026">
    <property type="protein sequence ID" value="EAL67940.1"/>
    <property type="molecule type" value="Genomic_DNA"/>
</dbReference>
<dbReference type="RefSeq" id="XP_641931.1">
    <property type="nucleotide sequence ID" value="XM_636839.1"/>
</dbReference>
<dbReference type="SMR" id="Q54XD0"/>
<dbReference type="FunCoup" id="Q54XD0">
    <property type="interactions" value="383"/>
</dbReference>
<dbReference type="STRING" id="44689.Q54XD0"/>
<dbReference type="PaxDb" id="44689-DDB0231592"/>
<dbReference type="EnsemblProtists" id="EAL67940">
    <property type="protein sequence ID" value="EAL67940"/>
    <property type="gene ID" value="DDB_G0279037"/>
</dbReference>
<dbReference type="GeneID" id="8621843"/>
<dbReference type="KEGG" id="ddi:DDB_G0279037"/>
<dbReference type="dictyBase" id="DDB_G0279037">
    <property type="gene designation" value="coq3"/>
</dbReference>
<dbReference type="VEuPathDB" id="AmoebaDB:DDB_G0279037"/>
<dbReference type="eggNOG" id="KOG1270">
    <property type="taxonomic scope" value="Eukaryota"/>
</dbReference>
<dbReference type="HOGENOM" id="CLU_042432_2_1_1"/>
<dbReference type="InParanoid" id="Q54XD0"/>
<dbReference type="OMA" id="LASRWWD"/>
<dbReference type="PhylomeDB" id="Q54XD0"/>
<dbReference type="Reactome" id="R-DDI-2142789">
    <property type="pathway name" value="Ubiquinol biosynthesis"/>
</dbReference>
<dbReference type="UniPathway" id="UPA00232"/>
<dbReference type="PRO" id="PR:Q54XD0"/>
<dbReference type="Proteomes" id="UP000002195">
    <property type="component" value="Chromosome 3"/>
</dbReference>
<dbReference type="GO" id="GO:0031314">
    <property type="term" value="C:extrinsic component of mitochondrial inner membrane"/>
    <property type="evidence" value="ECO:0007669"/>
    <property type="project" value="UniProtKB-UniRule"/>
</dbReference>
<dbReference type="GO" id="GO:0005743">
    <property type="term" value="C:mitochondrial inner membrane"/>
    <property type="evidence" value="ECO:0000250"/>
    <property type="project" value="dictyBase"/>
</dbReference>
<dbReference type="GO" id="GO:0005739">
    <property type="term" value="C:mitochondrion"/>
    <property type="evidence" value="ECO:0000318"/>
    <property type="project" value="GO_Central"/>
</dbReference>
<dbReference type="GO" id="GO:0061542">
    <property type="term" value="F:3-demethylubiquinol 3-O-methyltransferase activity"/>
    <property type="evidence" value="ECO:0007669"/>
    <property type="project" value="UniProtKB-UniRule"/>
</dbReference>
<dbReference type="GO" id="GO:0120537">
    <property type="term" value="F:3-demethylubiquinone 3-O-methyltransferase activity"/>
    <property type="evidence" value="ECO:0007669"/>
    <property type="project" value="RHEA"/>
</dbReference>
<dbReference type="GO" id="GO:0010420">
    <property type="term" value="F:polyprenyldihydroxybenzoate methyltransferase activity"/>
    <property type="evidence" value="ECO:0000250"/>
    <property type="project" value="dictyBase"/>
</dbReference>
<dbReference type="GO" id="GO:0032259">
    <property type="term" value="P:methylation"/>
    <property type="evidence" value="ECO:0007669"/>
    <property type="project" value="UniProtKB-KW"/>
</dbReference>
<dbReference type="GO" id="GO:0006744">
    <property type="term" value="P:ubiquinone biosynthetic process"/>
    <property type="evidence" value="ECO:0000250"/>
    <property type="project" value="dictyBase"/>
</dbReference>
<dbReference type="CDD" id="cd02440">
    <property type="entry name" value="AdoMet_MTases"/>
    <property type="match status" value="1"/>
</dbReference>
<dbReference type="FunFam" id="3.40.50.150:FF:000028">
    <property type="entry name" value="Ubiquinone biosynthesis O-methyltransferase"/>
    <property type="match status" value="1"/>
</dbReference>
<dbReference type="Gene3D" id="3.40.50.150">
    <property type="entry name" value="Vaccinia Virus protein VP39"/>
    <property type="match status" value="1"/>
</dbReference>
<dbReference type="HAMAP" id="MF_00472">
    <property type="entry name" value="UbiG"/>
    <property type="match status" value="1"/>
</dbReference>
<dbReference type="InterPro" id="IPR029063">
    <property type="entry name" value="SAM-dependent_MTases_sf"/>
</dbReference>
<dbReference type="InterPro" id="IPR010233">
    <property type="entry name" value="UbiG_MeTrfase"/>
</dbReference>
<dbReference type="NCBIfam" id="TIGR01983">
    <property type="entry name" value="UbiG"/>
    <property type="match status" value="1"/>
</dbReference>
<dbReference type="PANTHER" id="PTHR43464">
    <property type="entry name" value="METHYLTRANSFERASE"/>
    <property type="match status" value="1"/>
</dbReference>
<dbReference type="PANTHER" id="PTHR43464:SF19">
    <property type="entry name" value="UBIQUINONE BIOSYNTHESIS O-METHYLTRANSFERASE, MITOCHONDRIAL"/>
    <property type="match status" value="1"/>
</dbReference>
<dbReference type="Pfam" id="PF13489">
    <property type="entry name" value="Methyltransf_23"/>
    <property type="match status" value="1"/>
</dbReference>
<dbReference type="SUPFAM" id="SSF53335">
    <property type="entry name" value="S-adenosyl-L-methionine-dependent methyltransferases"/>
    <property type="match status" value="1"/>
</dbReference>
<comment type="function">
    <text evidence="1">O-methyltransferase required for two non-consecutive steps during ubiquinone biosynthesis. Catalyzes the 2 O-methylation of 3,4-dihydroxy-5-(all-trans-polyprenyl)benzoic acid into 4-hydroxy-3-methoxy-5-(all-trans-polyprenyl)benzoic acid. Also catalyzes the last step of ubiquinone biosynthesis by mediating methylation of 3-demethylubiquinone into ubiquinone. Also able to mediate the methylation of 3-demethylubiquinol into ubiquinol.</text>
</comment>
<comment type="catalytic activity">
    <reaction evidence="1">
        <text>a 3,4-dihydroxy-5-(all-trans-polyprenyl)benzoate + S-adenosyl-L-methionine = a 4-hydroxy-3-methoxy-5-(all-trans-polyprenyl)benzoate + S-adenosyl-L-homocysteine + H(+)</text>
        <dbReference type="Rhea" id="RHEA:44452"/>
        <dbReference type="Rhea" id="RHEA-COMP:10930"/>
        <dbReference type="Rhea" id="RHEA-COMP:10931"/>
        <dbReference type="ChEBI" id="CHEBI:15378"/>
        <dbReference type="ChEBI" id="CHEBI:57856"/>
        <dbReference type="ChEBI" id="CHEBI:59789"/>
        <dbReference type="ChEBI" id="CHEBI:64694"/>
        <dbReference type="ChEBI" id="CHEBI:84443"/>
        <dbReference type="EC" id="2.1.1.114"/>
    </reaction>
</comment>
<comment type="catalytic activity">
    <reaction evidence="1">
        <text>a 3-demethylubiquinone + S-adenosyl-L-methionine = a ubiquinone + S-adenosyl-L-homocysteine</text>
        <dbReference type="Rhea" id="RHEA:81215"/>
        <dbReference type="Rhea" id="RHEA-COMP:9565"/>
        <dbReference type="Rhea" id="RHEA-COMP:19654"/>
        <dbReference type="ChEBI" id="CHEBI:16389"/>
        <dbReference type="ChEBI" id="CHEBI:57856"/>
        <dbReference type="ChEBI" id="CHEBI:59789"/>
        <dbReference type="ChEBI" id="CHEBI:231825"/>
    </reaction>
</comment>
<comment type="catalytic activity">
    <reaction evidence="1">
        <text>a 3-demethylubiquinol + S-adenosyl-L-methionine = a ubiquinol + S-adenosyl-L-homocysteine + H(+)</text>
        <dbReference type="Rhea" id="RHEA:44380"/>
        <dbReference type="Rhea" id="RHEA-COMP:9566"/>
        <dbReference type="Rhea" id="RHEA-COMP:10914"/>
        <dbReference type="ChEBI" id="CHEBI:15378"/>
        <dbReference type="ChEBI" id="CHEBI:17976"/>
        <dbReference type="ChEBI" id="CHEBI:57856"/>
        <dbReference type="ChEBI" id="CHEBI:59789"/>
        <dbReference type="ChEBI" id="CHEBI:84422"/>
        <dbReference type="EC" id="2.1.1.64"/>
    </reaction>
</comment>
<comment type="cofactor">
    <cofactor evidence="1">
        <name>Mg(2+)</name>
        <dbReference type="ChEBI" id="CHEBI:18420"/>
    </cofactor>
</comment>
<comment type="pathway">
    <text evidence="1">Cofactor biosynthesis; ubiquinone biosynthesis.</text>
</comment>
<comment type="subunit">
    <text evidence="1">Component of a multi-subunit COQ enzyme complex.</text>
</comment>
<comment type="subcellular location">
    <subcellularLocation>
        <location evidence="1">Mitochondrion inner membrane</location>
        <topology evidence="1">Peripheral membrane protein</topology>
        <orientation evidence="1">Matrix side</orientation>
    </subcellularLocation>
</comment>
<comment type="miscellaneous">
    <text evidence="1">This protein may be expected to contain an N-terminal transit peptide but none has been predicted.</text>
</comment>
<comment type="similarity">
    <text evidence="1">Belongs to the class I-like SAM-binding methyltransferase superfamily. UbiG/COQ3 family.</text>
</comment>
<accession>Q54XD0</accession>
<reference key="1">
    <citation type="journal article" date="2005" name="Nature">
        <title>The genome of the social amoeba Dictyostelium discoideum.</title>
        <authorList>
            <person name="Eichinger L."/>
            <person name="Pachebat J.A."/>
            <person name="Gloeckner G."/>
            <person name="Rajandream M.A."/>
            <person name="Sucgang R."/>
            <person name="Berriman M."/>
            <person name="Song J."/>
            <person name="Olsen R."/>
            <person name="Szafranski K."/>
            <person name="Xu Q."/>
            <person name="Tunggal B."/>
            <person name="Kummerfeld S."/>
            <person name="Madera M."/>
            <person name="Konfortov B.A."/>
            <person name="Rivero F."/>
            <person name="Bankier A.T."/>
            <person name="Lehmann R."/>
            <person name="Hamlin N."/>
            <person name="Davies R."/>
            <person name="Gaudet P."/>
            <person name="Fey P."/>
            <person name="Pilcher K."/>
            <person name="Chen G."/>
            <person name="Saunders D."/>
            <person name="Sodergren E.J."/>
            <person name="Davis P."/>
            <person name="Kerhornou A."/>
            <person name="Nie X."/>
            <person name="Hall N."/>
            <person name="Anjard C."/>
            <person name="Hemphill L."/>
            <person name="Bason N."/>
            <person name="Farbrother P."/>
            <person name="Desany B."/>
            <person name="Just E."/>
            <person name="Morio T."/>
            <person name="Rost R."/>
            <person name="Churcher C.M."/>
            <person name="Cooper J."/>
            <person name="Haydock S."/>
            <person name="van Driessche N."/>
            <person name="Cronin A."/>
            <person name="Goodhead I."/>
            <person name="Muzny D.M."/>
            <person name="Mourier T."/>
            <person name="Pain A."/>
            <person name="Lu M."/>
            <person name="Harper D."/>
            <person name="Lindsay R."/>
            <person name="Hauser H."/>
            <person name="James K.D."/>
            <person name="Quiles M."/>
            <person name="Madan Babu M."/>
            <person name="Saito T."/>
            <person name="Buchrieser C."/>
            <person name="Wardroper A."/>
            <person name="Felder M."/>
            <person name="Thangavelu M."/>
            <person name="Johnson D."/>
            <person name="Knights A."/>
            <person name="Loulseged H."/>
            <person name="Mungall K.L."/>
            <person name="Oliver K."/>
            <person name="Price C."/>
            <person name="Quail M.A."/>
            <person name="Urushihara H."/>
            <person name="Hernandez J."/>
            <person name="Rabbinowitsch E."/>
            <person name="Steffen D."/>
            <person name="Sanders M."/>
            <person name="Ma J."/>
            <person name="Kohara Y."/>
            <person name="Sharp S."/>
            <person name="Simmonds M.N."/>
            <person name="Spiegler S."/>
            <person name="Tivey A."/>
            <person name="Sugano S."/>
            <person name="White B."/>
            <person name="Walker D."/>
            <person name="Woodward J.R."/>
            <person name="Winckler T."/>
            <person name="Tanaka Y."/>
            <person name="Shaulsky G."/>
            <person name="Schleicher M."/>
            <person name="Weinstock G.M."/>
            <person name="Rosenthal A."/>
            <person name="Cox E.C."/>
            <person name="Chisholm R.L."/>
            <person name="Gibbs R.A."/>
            <person name="Loomis W.F."/>
            <person name="Platzer M."/>
            <person name="Kay R.R."/>
            <person name="Williams J.G."/>
            <person name="Dear P.H."/>
            <person name="Noegel A.A."/>
            <person name="Barrell B.G."/>
            <person name="Kuspa A."/>
        </authorList>
    </citation>
    <scope>NUCLEOTIDE SEQUENCE [LARGE SCALE GENOMIC DNA]</scope>
    <source>
        <strain>AX4</strain>
    </source>
</reference>
<evidence type="ECO:0000255" key="1">
    <source>
        <dbReference type="HAMAP-Rule" id="MF_03190"/>
    </source>
</evidence>
<protein>
    <recommendedName>
        <fullName evidence="1">Ubiquinone biosynthesis O-methyltransferase, mitochondrial</fullName>
    </recommendedName>
    <alternativeName>
        <fullName evidence="1">3-demethylubiquinol 3-O-methyltransferase</fullName>
        <ecNumber evidence="1">2.1.1.64</ecNumber>
    </alternativeName>
    <alternativeName>
        <fullName evidence="1">3-demethylubiquinone 3-O-methyltransferase</fullName>
        <ecNumber evidence="1">2.1.1.-</ecNumber>
    </alternativeName>
    <alternativeName>
        <fullName evidence="1">Polyprenyldihydroxybenzoate methyltransferase</fullName>
        <ecNumber evidence="1">2.1.1.114</ecNumber>
    </alternativeName>
</protein>
<feature type="chain" id="PRO_0000328306" description="Ubiquinone biosynthesis O-methyltransferase, mitochondrial">
    <location>
        <begin position="1"/>
        <end position="321"/>
    </location>
</feature>
<feature type="binding site" evidence="1">
    <location>
        <position position="102"/>
    </location>
    <ligand>
        <name>S-adenosyl-L-methionine</name>
        <dbReference type="ChEBI" id="CHEBI:59789"/>
    </ligand>
</feature>
<feature type="binding site" evidence="1">
    <location>
        <position position="135"/>
    </location>
    <ligand>
        <name>S-adenosyl-L-methionine</name>
        <dbReference type="ChEBI" id="CHEBI:59789"/>
    </ligand>
</feature>
<feature type="binding site" evidence="1">
    <location>
        <position position="157"/>
    </location>
    <ligand>
        <name>S-adenosyl-L-methionine</name>
        <dbReference type="ChEBI" id="CHEBI:59789"/>
    </ligand>
</feature>
<feature type="binding site" evidence="1">
    <location>
        <position position="210"/>
    </location>
    <ligand>
        <name>S-adenosyl-L-methionine</name>
        <dbReference type="ChEBI" id="CHEBI:59789"/>
    </ligand>
</feature>
<feature type="binding site" evidence="1">
    <location>
        <position position="211"/>
    </location>
    <ligand>
        <name>Mg(2+)</name>
        <dbReference type="ChEBI" id="CHEBI:18420"/>
    </ligand>
</feature>
<feature type="binding site" evidence="1">
    <location>
        <position position="214"/>
    </location>
    <ligand>
        <name>Mg(2+)</name>
        <dbReference type="ChEBI" id="CHEBI:18420"/>
    </ligand>
</feature>
<feature type="binding site" evidence="1">
    <location>
        <position position="215"/>
    </location>
    <ligand>
        <name>Mg(2+)</name>
        <dbReference type="ChEBI" id="CHEBI:18420"/>
    </ligand>
</feature>
<organism>
    <name type="scientific">Dictyostelium discoideum</name>
    <name type="common">Social amoeba</name>
    <dbReference type="NCBI Taxonomy" id="44689"/>
    <lineage>
        <taxon>Eukaryota</taxon>
        <taxon>Amoebozoa</taxon>
        <taxon>Evosea</taxon>
        <taxon>Eumycetozoa</taxon>
        <taxon>Dictyostelia</taxon>
        <taxon>Dictyosteliales</taxon>
        <taxon>Dictyosteliaceae</taxon>
        <taxon>Dictyostelium</taxon>
    </lineage>
</organism>
<proteinExistence type="inferred from homology"/>
<sequence>MIYHLISKSCQRLNKPNLINNLIKSQKQSIIYSSSSSSGSSKFISNKYFTTTSNSNNNSNNTTTTTTTTLRQDEIDFFNQQSSDWWNPEGTMKPLHRMNPFRVKYICDRLKIYNEKVSKNPIHLPLEGLNVIDVGCGVGLLTESLSRLGASKVVGLDAAKNNILMAISHASFDQKLNENIQNKSLNYLESTIENFYNIENDQQFDAVCSLEVIEHVDNPKQFIDYLSKIVKPGGSIFISTINKTFLSYISAILGAEYIFRMVPVGTHHWDQFIKPKDLESYFDSNNCQITDLKGLVYNPLTCEWDFTNDLNVNYLLHAIKK</sequence>
<name>COQ3_DICDI</name>
<gene>
    <name evidence="1" type="primary">coq3</name>
    <name type="ORF">DDB_G0279037</name>
</gene>